<comment type="similarity">
    <text evidence="1">Belongs to the universal ribosomal protein uL29 family.</text>
</comment>
<proteinExistence type="evidence at protein level"/>
<keyword id="KW-0002">3D-structure</keyword>
<keyword id="KW-1185">Reference proteome</keyword>
<keyword id="KW-0687">Ribonucleoprotein</keyword>
<keyword id="KW-0689">Ribosomal protein</keyword>
<organism>
    <name type="scientific">Thermotoga maritima (strain ATCC 43589 / DSM 3109 / JCM 10099 / NBRC 100826 / MSB8)</name>
    <dbReference type="NCBI Taxonomy" id="243274"/>
    <lineage>
        <taxon>Bacteria</taxon>
        <taxon>Thermotogati</taxon>
        <taxon>Thermotogota</taxon>
        <taxon>Thermotogae</taxon>
        <taxon>Thermotogales</taxon>
        <taxon>Thermotogaceae</taxon>
        <taxon>Thermotoga</taxon>
    </lineage>
</organism>
<name>RL29_THEMA</name>
<protein>
    <recommendedName>
        <fullName evidence="1">Large ribosomal subunit protein uL29</fullName>
    </recommendedName>
    <alternativeName>
        <fullName>50S ribosomal protein L29</fullName>
    </alternativeName>
</protein>
<accession>P38514</accession>
<evidence type="ECO:0000305" key="1"/>
<evidence type="ECO:0007829" key="2">
    <source>
        <dbReference type="PDB" id="1R73"/>
    </source>
</evidence>
<reference key="1">
    <citation type="journal article" date="1994" name="J. Bacteriol.">
        <title>Phylogenetic depth of S10 and spc operons: cloning and sequencing of a ribosomal protein gene cluster from the extremely thermophilic bacterium Thermotoga maritima.</title>
        <authorList>
            <person name="Sanangelantoni A.M."/>
            <person name="Bocchetta M."/>
            <person name="Cammarano P."/>
            <person name="Tiboni O."/>
        </authorList>
    </citation>
    <scope>NUCLEOTIDE SEQUENCE [GENOMIC DNA]</scope>
    <source>
        <strain>ATCC 43589 / DSM 3109 / JCM 10099 / NBRC 100826 / MSB8</strain>
    </source>
</reference>
<reference key="2">
    <citation type="journal article" date="1999" name="Nature">
        <title>Evidence for lateral gene transfer between Archaea and Bacteria from genome sequence of Thermotoga maritima.</title>
        <authorList>
            <person name="Nelson K.E."/>
            <person name="Clayton R.A."/>
            <person name="Gill S.R."/>
            <person name="Gwinn M.L."/>
            <person name="Dodson R.J."/>
            <person name="Haft D.H."/>
            <person name="Hickey E.K."/>
            <person name="Peterson J.D."/>
            <person name="Nelson W.C."/>
            <person name="Ketchum K.A."/>
            <person name="McDonald L.A."/>
            <person name="Utterback T.R."/>
            <person name="Malek J.A."/>
            <person name="Linher K.D."/>
            <person name="Garrett M.M."/>
            <person name="Stewart A.M."/>
            <person name="Cotton M.D."/>
            <person name="Pratt M.S."/>
            <person name="Phillips C.A."/>
            <person name="Richardson D.L."/>
            <person name="Heidelberg J.F."/>
            <person name="Sutton G.G."/>
            <person name="Fleischmann R.D."/>
            <person name="Eisen J.A."/>
            <person name="White O."/>
            <person name="Salzberg S.L."/>
            <person name="Smith H.O."/>
            <person name="Venter J.C."/>
            <person name="Fraser C.M."/>
        </authorList>
    </citation>
    <scope>NUCLEOTIDE SEQUENCE [LARGE SCALE GENOMIC DNA]</scope>
    <source>
        <strain>ATCC 43589 / DSM 3109 / JCM 10099 / NBRC 100826 / MSB8</strain>
    </source>
</reference>
<dbReference type="EMBL" id="Z21677">
    <property type="protein sequence ID" value="CAA79785.1"/>
    <property type="molecule type" value="Genomic_DNA"/>
</dbReference>
<dbReference type="EMBL" id="AE000512">
    <property type="protein sequence ID" value="AAD36558.1"/>
    <property type="molecule type" value="Genomic_DNA"/>
</dbReference>
<dbReference type="PIR" id="S40196">
    <property type="entry name" value="S40196"/>
</dbReference>
<dbReference type="RefSeq" id="NP_229292.1">
    <property type="nucleotide sequence ID" value="NC_000853.1"/>
</dbReference>
<dbReference type="RefSeq" id="WP_004081820.1">
    <property type="nucleotide sequence ID" value="NZ_CP011107.1"/>
</dbReference>
<dbReference type="PDB" id="1R73">
    <property type="method" value="NMR"/>
    <property type="chains" value="A=1-66"/>
</dbReference>
<dbReference type="PDBsum" id="1R73"/>
<dbReference type="BMRB" id="P38514"/>
<dbReference type="SMR" id="P38514"/>
<dbReference type="FunCoup" id="P38514">
    <property type="interactions" value="322"/>
</dbReference>
<dbReference type="STRING" id="243274.TM_1492"/>
<dbReference type="PaxDb" id="243274-THEMA_06840"/>
<dbReference type="EnsemblBacteria" id="AAD36558">
    <property type="protein sequence ID" value="AAD36558"/>
    <property type="gene ID" value="TM_1492"/>
</dbReference>
<dbReference type="KEGG" id="tma:TM1492"/>
<dbReference type="KEGG" id="tmi:THEMA_06840"/>
<dbReference type="KEGG" id="tmm:Tmari_1500"/>
<dbReference type="KEGG" id="tmw:THMA_1524"/>
<dbReference type="eggNOG" id="COG0255">
    <property type="taxonomic scope" value="Bacteria"/>
</dbReference>
<dbReference type="InParanoid" id="P38514"/>
<dbReference type="OrthoDB" id="9815192at2"/>
<dbReference type="EvolutionaryTrace" id="P38514"/>
<dbReference type="Proteomes" id="UP000008183">
    <property type="component" value="Chromosome"/>
</dbReference>
<dbReference type="GO" id="GO:0022625">
    <property type="term" value="C:cytosolic large ribosomal subunit"/>
    <property type="evidence" value="ECO:0000318"/>
    <property type="project" value="GO_Central"/>
</dbReference>
<dbReference type="GO" id="GO:0003735">
    <property type="term" value="F:structural constituent of ribosome"/>
    <property type="evidence" value="ECO:0007669"/>
    <property type="project" value="InterPro"/>
</dbReference>
<dbReference type="GO" id="GO:0006412">
    <property type="term" value="P:translation"/>
    <property type="evidence" value="ECO:0007669"/>
    <property type="project" value="UniProtKB-UniRule"/>
</dbReference>
<dbReference type="CDD" id="cd00427">
    <property type="entry name" value="Ribosomal_L29_HIP"/>
    <property type="match status" value="1"/>
</dbReference>
<dbReference type="FunFam" id="1.10.287.310:FF:000001">
    <property type="entry name" value="50S ribosomal protein L29"/>
    <property type="match status" value="1"/>
</dbReference>
<dbReference type="Gene3D" id="1.10.287.310">
    <property type="match status" value="1"/>
</dbReference>
<dbReference type="HAMAP" id="MF_00374">
    <property type="entry name" value="Ribosomal_uL29"/>
    <property type="match status" value="1"/>
</dbReference>
<dbReference type="InterPro" id="IPR050063">
    <property type="entry name" value="Ribosomal_protein_uL29"/>
</dbReference>
<dbReference type="InterPro" id="IPR001854">
    <property type="entry name" value="Ribosomal_uL29"/>
</dbReference>
<dbReference type="InterPro" id="IPR018254">
    <property type="entry name" value="Ribosomal_uL29_CS"/>
</dbReference>
<dbReference type="InterPro" id="IPR036049">
    <property type="entry name" value="Ribosomal_uL29_sf"/>
</dbReference>
<dbReference type="NCBIfam" id="TIGR00012">
    <property type="entry name" value="L29"/>
    <property type="match status" value="1"/>
</dbReference>
<dbReference type="PANTHER" id="PTHR10916">
    <property type="entry name" value="60S RIBOSOMAL PROTEIN L35/50S RIBOSOMAL PROTEIN L29"/>
    <property type="match status" value="1"/>
</dbReference>
<dbReference type="PANTHER" id="PTHR10916:SF0">
    <property type="entry name" value="LARGE RIBOSOMAL SUBUNIT PROTEIN UL29C"/>
    <property type="match status" value="1"/>
</dbReference>
<dbReference type="Pfam" id="PF00831">
    <property type="entry name" value="Ribosomal_L29"/>
    <property type="match status" value="1"/>
</dbReference>
<dbReference type="SUPFAM" id="SSF46561">
    <property type="entry name" value="Ribosomal protein L29 (L29p)"/>
    <property type="match status" value="1"/>
</dbReference>
<dbReference type="PROSITE" id="PS00579">
    <property type="entry name" value="RIBOSOMAL_L29"/>
    <property type="match status" value="1"/>
</dbReference>
<sequence length="66" mass="7972">MKASELRNYTDEELKNLLEEKKRQLMELRFQLAMGQLKNTSLIKLTKRDIARIKTILRERELGIRR</sequence>
<gene>
    <name type="primary">rpmC</name>
    <name type="ordered locus">TM_1492</name>
</gene>
<feature type="chain" id="PRO_0000130481" description="Large ribosomal subunit protein uL29">
    <location>
        <begin position="1"/>
        <end position="66"/>
    </location>
</feature>
<feature type="helix" evidence="2">
    <location>
        <begin position="5"/>
        <end position="8"/>
    </location>
</feature>
<feature type="helix" evidence="2">
    <location>
        <begin position="11"/>
        <end position="34"/>
    </location>
</feature>
<feature type="helix" evidence="2">
    <location>
        <begin position="40"/>
        <end position="62"/>
    </location>
</feature>
<feature type="turn" evidence="2">
    <location>
        <begin position="63"/>
        <end position="65"/>
    </location>
</feature>